<keyword id="KW-0414">Isoprene biosynthesis</keyword>
<keyword id="KW-0464">Manganese</keyword>
<keyword id="KW-0479">Metal-binding</keyword>
<keyword id="KW-0521">NADP</keyword>
<keyword id="KW-0560">Oxidoreductase</keyword>
<name>DXR_CLOBK</name>
<reference key="1">
    <citation type="journal article" date="2007" name="PLoS ONE">
        <title>Analysis of the neurotoxin complex genes in Clostridium botulinum A1-A4 and B1 strains: BoNT/A3, /Ba4 and /B1 clusters are located within plasmids.</title>
        <authorList>
            <person name="Smith T.J."/>
            <person name="Hill K.K."/>
            <person name="Foley B.T."/>
            <person name="Detter J.C."/>
            <person name="Munk A.C."/>
            <person name="Bruce D.C."/>
            <person name="Doggett N.A."/>
            <person name="Smith L.A."/>
            <person name="Marks J.D."/>
            <person name="Xie G."/>
            <person name="Brettin T.S."/>
        </authorList>
    </citation>
    <scope>NUCLEOTIDE SEQUENCE [LARGE SCALE GENOMIC DNA]</scope>
    <source>
        <strain>Okra / Type B1</strain>
    </source>
</reference>
<proteinExistence type="inferred from homology"/>
<protein>
    <recommendedName>
        <fullName evidence="1">1-deoxy-D-xylulose 5-phosphate reductoisomerase</fullName>
        <shortName evidence="1">DXP reductoisomerase</shortName>
        <ecNumber evidence="1">1.1.1.267</ecNumber>
    </recommendedName>
    <alternativeName>
        <fullName evidence="1">1-deoxyxylulose-5-phosphate reductoisomerase</fullName>
    </alternativeName>
    <alternativeName>
        <fullName evidence="1">2-C-methyl-D-erythritol 4-phosphate synthase</fullName>
    </alternativeName>
</protein>
<sequence length="385" mass="43025">MKNITILGATGSIGTQTLDVIRKEKEELKLVAISANKSYKKVIEIIKEFKPKYAVLMEENAFKIVEDFCIDNKIDTKVLKGMEGMIYISTLEEVNTVVTSVVGMIGLVPTIKAIESGKDIALANKETLVVAGELVISKAKEHNVNILPVDSEHGAIFQCLRGNKKEEVKNIIVTASGGPFRGKKKEELIEVKPEHALKHPKWNMGRKISIDSATLMNKGLEVIEAHFLFGVDYENIKVVVHPQSIVHSMVEYKDGSVIAQMATPDMKLPIQYALNYPNRKESQIEPLDFYKISNLTFEKPDMDTFLPLKLAYEAGEKGGVMPAILNGANEVAVDLFLKGKIEFLQIGDLLQECMNKFYKSMEATLENVISVDKEVREYLGKKYDI</sequence>
<organism>
    <name type="scientific">Clostridium botulinum (strain Okra / Type B1)</name>
    <dbReference type="NCBI Taxonomy" id="498213"/>
    <lineage>
        <taxon>Bacteria</taxon>
        <taxon>Bacillati</taxon>
        <taxon>Bacillota</taxon>
        <taxon>Clostridia</taxon>
        <taxon>Eubacteriales</taxon>
        <taxon>Clostridiaceae</taxon>
        <taxon>Clostridium</taxon>
    </lineage>
</organism>
<feature type="chain" id="PRO_1000098488" description="1-deoxy-D-xylulose 5-phosphate reductoisomerase">
    <location>
        <begin position="1"/>
        <end position="385"/>
    </location>
</feature>
<feature type="binding site" evidence="1">
    <location>
        <position position="10"/>
    </location>
    <ligand>
        <name>NADPH</name>
        <dbReference type="ChEBI" id="CHEBI:57783"/>
    </ligand>
</feature>
<feature type="binding site" evidence="1">
    <location>
        <position position="11"/>
    </location>
    <ligand>
        <name>NADPH</name>
        <dbReference type="ChEBI" id="CHEBI:57783"/>
    </ligand>
</feature>
<feature type="binding site" evidence="1">
    <location>
        <position position="12"/>
    </location>
    <ligand>
        <name>NADPH</name>
        <dbReference type="ChEBI" id="CHEBI:57783"/>
    </ligand>
</feature>
<feature type="binding site" evidence="1">
    <location>
        <position position="13"/>
    </location>
    <ligand>
        <name>NADPH</name>
        <dbReference type="ChEBI" id="CHEBI:57783"/>
    </ligand>
</feature>
<feature type="binding site" evidence="1">
    <location>
        <position position="37"/>
    </location>
    <ligand>
        <name>NADPH</name>
        <dbReference type="ChEBI" id="CHEBI:57783"/>
    </ligand>
</feature>
<feature type="binding site" evidence="1">
    <location>
        <position position="124"/>
    </location>
    <ligand>
        <name>NADPH</name>
        <dbReference type="ChEBI" id="CHEBI:57783"/>
    </ligand>
</feature>
<feature type="binding site" evidence="1">
    <location>
        <position position="125"/>
    </location>
    <ligand>
        <name>1-deoxy-D-xylulose 5-phosphate</name>
        <dbReference type="ChEBI" id="CHEBI:57792"/>
    </ligand>
</feature>
<feature type="binding site" evidence="1">
    <location>
        <position position="126"/>
    </location>
    <ligand>
        <name>NADPH</name>
        <dbReference type="ChEBI" id="CHEBI:57783"/>
    </ligand>
</feature>
<feature type="binding site" evidence="1">
    <location>
        <position position="150"/>
    </location>
    <ligand>
        <name>Mn(2+)</name>
        <dbReference type="ChEBI" id="CHEBI:29035"/>
    </ligand>
</feature>
<feature type="binding site" evidence="1">
    <location>
        <position position="151"/>
    </location>
    <ligand>
        <name>1-deoxy-D-xylulose 5-phosphate</name>
        <dbReference type="ChEBI" id="CHEBI:57792"/>
    </ligand>
</feature>
<feature type="binding site" evidence="1">
    <location>
        <position position="152"/>
    </location>
    <ligand>
        <name>1-deoxy-D-xylulose 5-phosphate</name>
        <dbReference type="ChEBI" id="CHEBI:57792"/>
    </ligand>
</feature>
<feature type="binding site" evidence="1">
    <location>
        <position position="152"/>
    </location>
    <ligand>
        <name>Mn(2+)</name>
        <dbReference type="ChEBI" id="CHEBI:29035"/>
    </ligand>
</feature>
<feature type="binding site" evidence="1">
    <location>
        <position position="176"/>
    </location>
    <ligand>
        <name>1-deoxy-D-xylulose 5-phosphate</name>
        <dbReference type="ChEBI" id="CHEBI:57792"/>
    </ligand>
</feature>
<feature type="binding site" evidence="1">
    <location>
        <position position="199"/>
    </location>
    <ligand>
        <name>1-deoxy-D-xylulose 5-phosphate</name>
        <dbReference type="ChEBI" id="CHEBI:57792"/>
    </ligand>
</feature>
<feature type="binding site" evidence="1">
    <location>
        <position position="205"/>
    </location>
    <ligand>
        <name>NADPH</name>
        <dbReference type="ChEBI" id="CHEBI:57783"/>
    </ligand>
</feature>
<feature type="binding site" evidence="1">
    <location>
        <position position="212"/>
    </location>
    <ligand>
        <name>1-deoxy-D-xylulose 5-phosphate</name>
        <dbReference type="ChEBI" id="CHEBI:57792"/>
    </ligand>
</feature>
<feature type="binding site" evidence="1">
    <location>
        <position position="217"/>
    </location>
    <ligand>
        <name>1-deoxy-D-xylulose 5-phosphate</name>
        <dbReference type="ChEBI" id="CHEBI:57792"/>
    </ligand>
</feature>
<feature type="binding site" evidence="1">
    <location>
        <position position="218"/>
    </location>
    <ligand>
        <name>1-deoxy-D-xylulose 5-phosphate</name>
        <dbReference type="ChEBI" id="CHEBI:57792"/>
    </ligand>
</feature>
<feature type="binding site" evidence="1">
    <location>
        <position position="221"/>
    </location>
    <ligand>
        <name>1-deoxy-D-xylulose 5-phosphate</name>
        <dbReference type="ChEBI" id="CHEBI:57792"/>
    </ligand>
</feature>
<feature type="binding site" evidence="1">
    <location>
        <position position="221"/>
    </location>
    <ligand>
        <name>Mn(2+)</name>
        <dbReference type="ChEBI" id="CHEBI:29035"/>
    </ligand>
</feature>
<gene>
    <name evidence="1" type="primary">dxr</name>
    <name type="ordered locus">CLD_2214</name>
</gene>
<evidence type="ECO:0000255" key="1">
    <source>
        <dbReference type="HAMAP-Rule" id="MF_00183"/>
    </source>
</evidence>
<comment type="function">
    <text evidence="1">Catalyzes the NADPH-dependent rearrangement and reduction of 1-deoxy-D-xylulose-5-phosphate (DXP) to 2-C-methyl-D-erythritol 4-phosphate (MEP).</text>
</comment>
<comment type="catalytic activity">
    <reaction evidence="1">
        <text>2-C-methyl-D-erythritol 4-phosphate + NADP(+) = 1-deoxy-D-xylulose 5-phosphate + NADPH + H(+)</text>
        <dbReference type="Rhea" id="RHEA:13717"/>
        <dbReference type="ChEBI" id="CHEBI:15378"/>
        <dbReference type="ChEBI" id="CHEBI:57783"/>
        <dbReference type="ChEBI" id="CHEBI:57792"/>
        <dbReference type="ChEBI" id="CHEBI:58262"/>
        <dbReference type="ChEBI" id="CHEBI:58349"/>
        <dbReference type="EC" id="1.1.1.267"/>
    </reaction>
    <physiologicalReaction direction="right-to-left" evidence="1">
        <dbReference type="Rhea" id="RHEA:13719"/>
    </physiologicalReaction>
</comment>
<comment type="cofactor">
    <cofactor evidence="1">
        <name>Mg(2+)</name>
        <dbReference type="ChEBI" id="CHEBI:18420"/>
    </cofactor>
    <cofactor evidence="1">
        <name>Mn(2+)</name>
        <dbReference type="ChEBI" id="CHEBI:29035"/>
    </cofactor>
</comment>
<comment type="pathway">
    <text evidence="1">Isoprenoid biosynthesis; isopentenyl diphosphate biosynthesis via DXP pathway; isopentenyl diphosphate from 1-deoxy-D-xylulose 5-phosphate: step 1/6.</text>
</comment>
<comment type="similarity">
    <text evidence="1">Belongs to the DXR family.</text>
</comment>
<accession>B1II57</accession>
<dbReference type="EC" id="1.1.1.267" evidence="1"/>
<dbReference type="EMBL" id="CP000939">
    <property type="protein sequence ID" value="ACA46612.1"/>
    <property type="molecule type" value="Genomic_DNA"/>
</dbReference>
<dbReference type="RefSeq" id="WP_003406068.1">
    <property type="nucleotide sequence ID" value="NC_010516.1"/>
</dbReference>
<dbReference type="SMR" id="B1II57"/>
<dbReference type="KEGG" id="cbb:CLD_2214"/>
<dbReference type="HOGENOM" id="CLU_035714_4_0_9"/>
<dbReference type="UniPathway" id="UPA00056">
    <property type="reaction ID" value="UER00092"/>
</dbReference>
<dbReference type="Proteomes" id="UP000008541">
    <property type="component" value="Chromosome"/>
</dbReference>
<dbReference type="GO" id="GO:0030604">
    <property type="term" value="F:1-deoxy-D-xylulose-5-phosphate reductoisomerase activity"/>
    <property type="evidence" value="ECO:0007669"/>
    <property type="project" value="UniProtKB-UniRule"/>
</dbReference>
<dbReference type="GO" id="GO:0030145">
    <property type="term" value="F:manganese ion binding"/>
    <property type="evidence" value="ECO:0007669"/>
    <property type="project" value="TreeGrafter"/>
</dbReference>
<dbReference type="GO" id="GO:0070402">
    <property type="term" value="F:NADPH binding"/>
    <property type="evidence" value="ECO:0007669"/>
    <property type="project" value="InterPro"/>
</dbReference>
<dbReference type="GO" id="GO:0051484">
    <property type="term" value="P:isopentenyl diphosphate biosynthetic process, methylerythritol 4-phosphate pathway involved in terpenoid biosynthetic process"/>
    <property type="evidence" value="ECO:0007669"/>
    <property type="project" value="TreeGrafter"/>
</dbReference>
<dbReference type="FunFam" id="3.40.50.720:FF:000045">
    <property type="entry name" value="1-deoxy-D-xylulose 5-phosphate reductoisomerase"/>
    <property type="match status" value="1"/>
</dbReference>
<dbReference type="Gene3D" id="1.10.1740.10">
    <property type="match status" value="1"/>
</dbReference>
<dbReference type="Gene3D" id="3.40.50.720">
    <property type="entry name" value="NAD(P)-binding Rossmann-like Domain"/>
    <property type="match status" value="1"/>
</dbReference>
<dbReference type="HAMAP" id="MF_00183">
    <property type="entry name" value="DXP_reductoisom"/>
    <property type="match status" value="1"/>
</dbReference>
<dbReference type="InterPro" id="IPR003821">
    <property type="entry name" value="DXP_reductoisomerase"/>
</dbReference>
<dbReference type="InterPro" id="IPR013644">
    <property type="entry name" value="DXP_reductoisomerase_C"/>
</dbReference>
<dbReference type="InterPro" id="IPR013512">
    <property type="entry name" value="DXP_reductoisomerase_N"/>
</dbReference>
<dbReference type="InterPro" id="IPR026877">
    <property type="entry name" value="DXPR_C"/>
</dbReference>
<dbReference type="InterPro" id="IPR036169">
    <property type="entry name" value="DXPR_C_sf"/>
</dbReference>
<dbReference type="InterPro" id="IPR036291">
    <property type="entry name" value="NAD(P)-bd_dom_sf"/>
</dbReference>
<dbReference type="NCBIfam" id="TIGR00243">
    <property type="entry name" value="Dxr"/>
    <property type="match status" value="1"/>
</dbReference>
<dbReference type="NCBIfam" id="NF009114">
    <property type="entry name" value="PRK12464.1"/>
    <property type="match status" value="1"/>
</dbReference>
<dbReference type="PANTHER" id="PTHR30525">
    <property type="entry name" value="1-DEOXY-D-XYLULOSE 5-PHOSPHATE REDUCTOISOMERASE"/>
    <property type="match status" value="1"/>
</dbReference>
<dbReference type="PANTHER" id="PTHR30525:SF0">
    <property type="entry name" value="1-DEOXY-D-XYLULOSE 5-PHOSPHATE REDUCTOISOMERASE, CHLOROPLASTIC"/>
    <property type="match status" value="1"/>
</dbReference>
<dbReference type="Pfam" id="PF08436">
    <property type="entry name" value="DXP_redisom_C"/>
    <property type="match status" value="1"/>
</dbReference>
<dbReference type="Pfam" id="PF02670">
    <property type="entry name" value="DXP_reductoisom"/>
    <property type="match status" value="1"/>
</dbReference>
<dbReference type="Pfam" id="PF13288">
    <property type="entry name" value="DXPR_C"/>
    <property type="match status" value="1"/>
</dbReference>
<dbReference type="PIRSF" id="PIRSF006205">
    <property type="entry name" value="Dxp_reductismrs"/>
    <property type="match status" value="1"/>
</dbReference>
<dbReference type="SUPFAM" id="SSF69055">
    <property type="entry name" value="1-deoxy-D-xylulose-5-phosphate reductoisomerase, C-terminal domain"/>
    <property type="match status" value="1"/>
</dbReference>
<dbReference type="SUPFAM" id="SSF55347">
    <property type="entry name" value="Glyceraldehyde-3-phosphate dehydrogenase-like, C-terminal domain"/>
    <property type="match status" value="1"/>
</dbReference>
<dbReference type="SUPFAM" id="SSF51735">
    <property type="entry name" value="NAD(P)-binding Rossmann-fold domains"/>
    <property type="match status" value="1"/>
</dbReference>